<reference key="1">
    <citation type="journal article" date="2009" name="PLoS Genet.">
        <title>Organised genome dynamics in the Escherichia coli species results in highly diverse adaptive paths.</title>
        <authorList>
            <person name="Touchon M."/>
            <person name="Hoede C."/>
            <person name="Tenaillon O."/>
            <person name="Barbe V."/>
            <person name="Baeriswyl S."/>
            <person name="Bidet P."/>
            <person name="Bingen E."/>
            <person name="Bonacorsi S."/>
            <person name="Bouchier C."/>
            <person name="Bouvet O."/>
            <person name="Calteau A."/>
            <person name="Chiapello H."/>
            <person name="Clermont O."/>
            <person name="Cruveiller S."/>
            <person name="Danchin A."/>
            <person name="Diard M."/>
            <person name="Dossat C."/>
            <person name="Karoui M.E."/>
            <person name="Frapy E."/>
            <person name="Garry L."/>
            <person name="Ghigo J.M."/>
            <person name="Gilles A.M."/>
            <person name="Johnson J."/>
            <person name="Le Bouguenec C."/>
            <person name="Lescat M."/>
            <person name="Mangenot S."/>
            <person name="Martinez-Jehanne V."/>
            <person name="Matic I."/>
            <person name="Nassif X."/>
            <person name="Oztas S."/>
            <person name="Petit M.A."/>
            <person name="Pichon C."/>
            <person name="Rouy Z."/>
            <person name="Ruf C.S."/>
            <person name="Schneider D."/>
            <person name="Tourret J."/>
            <person name="Vacherie B."/>
            <person name="Vallenet D."/>
            <person name="Medigue C."/>
            <person name="Rocha E.P.C."/>
            <person name="Denamur E."/>
        </authorList>
    </citation>
    <scope>NUCLEOTIDE SEQUENCE [LARGE SCALE GENOMIC DNA]</scope>
    <source>
        <strain>S88 / ExPEC</strain>
    </source>
</reference>
<name>PSD_ECO45</name>
<feature type="chain" id="PRO_1000131358" description="Phosphatidylserine decarboxylase beta chain" evidence="1">
    <location>
        <begin position="1"/>
        <end position="253"/>
    </location>
</feature>
<feature type="chain" id="PRO_1000131359" description="Phosphatidylserine decarboxylase alpha chain" evidence="1">
    <location>
        <begin position="254"/>
        <end position="322"/>
    </location>
</feature>
<feature type="region of interest" description="Disordered" evidence="2">
    <location>
        <begin position="293"/>
        <end position="322"/>
    </location>
</feature>
<feature type="compositionally biased region" description="Basic and acidic residues" evidence="2">
    <location>
        <begin position="308"/>
        <end position="322"/>
    </location>
</feature>
<feature type="active site" description="Charge relay system; for autoendoproteolytic cleavage activity" evidence="1">
    <location>
        <position position="90"/>
    </location>
</feature>
<feature type="active site" description="Charge relay system; for autoendoproteolytic cleavage activity" evidence="1">
    <location>
        <position position="147"/>
    </location>
</feature>
<feature type="active site" description="Charge relay system; for autoendoproteolytic cleavage activity" evidence="1">
    <location>
        <position position="254"/>
    </location>
</feature>
<feature type="active site" description="Schiff-base intermediate with substrate; via pyruvic acid; for decarboxylase activity" evidence="1">
    <location>
        <position position="254"/>
    </location>
</feature>
<feature type="site" description="Cleavage (non-hydrolytic); by autocatalysis" evidence="1">
    <location>
        <begin position="253"/>
        <end position="254"/>
    </location>
</feature>
<feature type="modified residue" description="Pyruvic acid (Ser); by autocatalysis" evidence="1">
    <location>
        <position position="254"/>
    </location>
</feature>
<comment type="function">
    <text evidence="1">Catalyzes the formation of phosphatidylethanolamine (PtdEtn) from phosphatidylserine (PtdSer).</text>
</comment>
<comment type="catalytic activity">
    <reaction evidence="1">
        <text>a 1,2-diacyl-sn-glycero-3-phospho-L-serine + H(+) = a 1,2-diacyl-sn-glycero-3-phosphoethanolamine + CO2</text>
        <dbReference type="Rhea" id="RHEA:20828"/>
        <dbReference type="ChEBI" id="CHEBI:15378"/>
        <dbReference type="ChEBI" id="CHEBI:16526"/>
        <dbReference type="ChEBI" id="CHEBI:57262"/>
        <dbReference type="ChEBI" id="CHEBI:64612"/>
        <dbReference type="EC" id="4.1.1.65"/>
    </reaction>
</comment>
<comment type="cofactor">
    <cofactor evidence="1">
        <name>pyruvate</name>
        <dbReference type="ChEBI" id="CHEBI:15361"/>
    </cofactor>
    <text evidence="1">Binds 1 pyruvoyl group covalently per subunit.</text>
</comment>
<comment type="pathway">
    <text evidence="1">Phospholipid metabolism; phosphatidylethanolamine biosynthesis; phosphatidylethanolamine from CDP-diacylglycerol: step 2/2.</text>
</comment>
<comment type="subunit">
    <text evidence="1">Heterodimer of a large membrane-associated beta subunit and a small pyruvoyl-containing alpha subunit.</text>
</comment>
<comment type="subcellular location">
    <subcellularLocation>
        <location evidence="1">Cell membrane</location>
        <topology evidence="1">Peripheral membrane protein</topology>
    </subcellularLocation>
</comment>
<comment type="PTM">
    <text evidence="1">Is synthesized initially as an inactive proenzyme. Formation of the active enzyme involves a self-maturation process in which the active site pyruvoyl group is generated from an internal serine residue via an autocatalytic post-translational modification. Two non-identical subunits are generated from the proenzyme in this reaction, and the pyruvate is formed at the N-terminus of the alpha chain, which is derived from the carboxyl end of the proenzyme. The autoendoproteolytic cleavage occurs by a canonical serine protease mechanism, in which the side chain hydroxyl group of the serine supplies its oxygen atom to form the C-terminus of the beta chain, while the remainder of the serine residue undergoes an oxidative deamination to produce ammonia and the pyruvoyl prosthetic group on the alpha chain. During this reaction, the Ser that is part of the protease active site of the proenzyme becomes the pyruvoyl prosthetic group, which constitutes an essential element of the active site of the mature decarboxylase.</text>
</comment>
<comment type="similarity">
    <text evidence="1">Belongs to the phosphatidylserine decarboxylase family. PSD-B subfamily. Prokaryotic type I sub-subfamily.</text>
</comment>
<proteinExistence type="inferred from homology"/>
<gene>
    <name evidence="1" type="primary">psd</name>
    <name type="ordered locus">ECS88_4748</name>
</gene>
<keyword id="KW-1003">Cell membrane</keyword>
<keyword id="KW-0210">Decarboxylase</keyword>
<keyword id="KW-0444">Lipid biosynthesis</keyword>
<keyword id="KW-0443">Lipid metabolism</keyword>
<keyword id="KW-0456">Lyase</keyword>
<keyword id="KW-0472">Membrane</keyword>
<keyword id="KW-0594">Phospholipid biosynthesis</keyword>
<keyword id="KW-1208">Phospholipid metabolism</keyword>
<keyword id="KW-0670">Pyruvate</keyword>
<keyword id="KW-1185">Reference proteome</keyword>
<keyword id="KW-0865">Zymogen</keyword>
<dbReference type="EC" id="4.1.1.65" evidence="1"/>
<dbReference type="EMBL" id="CU928161">
    <property type="protein sequence ID" value="CAR05898.1"/>
    <property type="molecule type" value="Genomic_DNA"/>
</dbReference>
<dbReference type="SMR" id="B7MKW7"/>
<dbReference type="KEGG" id="ecz:ECS88_4748"/>
<dbReference type="HOGENOM" id="CLU_029061_4_1_6"/>
<dbReference type="UniPathway" id="UPA00558">
    <property type="reaction ID" value="UER00616"/>
</dbReference>
<dbReference type="Proteomes" id="UP000000747">
    <property type="component" value="Chromosome"/>
</dbReference>
<dbReference type="GO" id="GO:0005886">
    <property type="term" value="C:plasma membrane"/>
    <property type="evidence" value="ECO:0007669"/>
    <property type="project" value="UniProtKB-SubCell"/>
</dbReference>
<dbReference type="GO" id="GO:0004609">
    <property type="term" value="F:phosphatidylserine decarboxylase activity"/>
    <property type="evidence" value="ECO:0007669"/>
    <property type="project" value="UniProtKB-UniRule"/>
</dbReference>
<dbReference type="GO" id="GO:0006646">
    <property type="term" value="P:phosphatidylethanolamine biosynthetic process"/>
    <property type="evidence" value="ECO:0007669"/>
    <property type="project" value="UniProtKB-UniRule"/>
</dbReference>
<dbReference type="HAMAP" id="MF_00662">
    <property type="entry name" value="PS_decarb_PSD_B_type1"/>
    <property type="match status" value="1"/>
</dbReference>
<dbReference type="InterPro" id="IPR003817">
    <property type="entry name" value="PS_Dcarbxylase"/>
</dbReference>
<dbReference type="InterPro" id="IPR033177">
    <property type="entry name" value="PSD-B"/>
</dbReference>
<dbReference type="InterPro" id="IPR033178">
    <property type="entry name" value="PSD_type1_pro"/>
</dbReference>
<dbReference type="NCBIfam" id="TIGR00163">
    <property type="entry name" value="PS_decarb"/>
    <property type="match status" value="1"/>
</dbReference>
<dbReference type="PANTHER" id="PTHR10067">
    <property type="entry name" value="PHOSPHATIDYLSERINE DECARBOXYLASE"/>
    <property type="match status" value="1"/>
</dbReference>
<dbReference type="PANTHER" id="PTHR10067:SF6">
    <property type="entry name" value="PHOSPHATIDYLSERINE DECARBOXYLASE PROENZYME, MITOCHONDRIAL"/>
    <property type="match status" value="1"/>
</dbReference>
<dbReference type="Pfam" id="PF02666">
    <property type="entry name" value="PS_Dcarbxylase"/>
    <property type="match status" value="1"/>
</dbReference>
<sequence>MLNSFKLSLQYILPKLWLTRLAGWGASKRAGWLTKLVIDLFVKYYKVDMKEAQKPDTASYRTFNEFFVRPLRDEVRPIDTDPNVLVMPADGVISQLGKIEEDKILQAKGHNYSLEALLAGNYLMADLFRNGTFVTTYLSPRDYHRVHMPCNGILREMIYVPGDLFSVNHLTAQNVPNLFARNERVICLFDTEFGPMAQILVGATIVGSIETVWAGTITPPREGIIKRWTWPAGENDDSVALLKGQEMGRFKLGSTVINLFAPGKVNLVEQLESLSVTKIGQPLAVSTETFVTPDAEPAPLPAEEIEAEHDASPLVDDKKDQV</sequence>
<organism>
    <name type="scientific">Escherichia coli O45:K1 (strain S88 / ExPEC)</name>
    <dbReference type="NCBI Taxonomy" id="585035"/>
    <lineage>
        <taxon>Bacteria</taxon>
        <taxon>Pseudomonadati</taxon>
        <taxon>Pseudomonadota</taxon>
        <taxon>Gammaproteobacteria</taxon>
        <taxon>Enterobacterales</taxon>
        <taxon>Enterobacteriaceae</taxon>
        <taxon>Escherichia</taxon>
    </lineage>
</organism>
<accession>B7MKW7</accession>
<evidence type="ECO:0000255" key="1">
    <source>
        <dbReference type="HAMAP-Rule" id="MF_00662"/>
    </source>
</evidence>
<evidence type="ECO:0000256" key="2">
    <source>
        <dbReference type="SAM" id="MobiDB-lite"/>
    </source>
</evidence>
<protein>
    <recommendedName>
        <fullName evidence="1">Phosphatidylserine decarboxylase proenzyme</fullName>
        <ecNumber evidence="1">4.1.1.65</ecNumber>
    </recommendedName>
    <component>
        <recommendedName>
            <fullName evidence="1">Phosphatidylserine decarboxylase alpha chain</fullName>
        </recommendedName>
    </component>
    <component>
        <recommendedName>
            <fullName evidence="1">Phosphatidylserine decarboxylase beta chain</fullName>
        </recommendedName>
    </component>
</protein>